<organism>
    <name type="scientific">Triticum aestivum</name>
    <name type="common">Wheat</name>
    <dbReference type="NCBI Taxonomy" id="4565"/>
    <lineage>
        <taxon>Eukaryota</taxon>
        <taxon>Viridiplantae</taxon>
        <taxon>Streptophyta</taxon>
        <taxon>Embryophyta</taxon>
        <taxon>Tracheophyta</taxon>
        <taxon>Spermatophyta</taxon>
        <taxon>Magnoliopsida</taxon>
        <taxon>Liliopsida</taxon>
        <taxon>Poales</taxon>
        <taxon>Poaceae</taxon>
        <taxon>BOP clade</taxon>
        <taxon>Pooideae</taxon>
        <taxon>Triticodae</taxon>
        <taxon>Triticeae</taxon>
        <taxon>Triticinae</taxon>
        <taxon>Triticum</taxon>
    </lineage>
</organism>
<sequence>MKNLFILALLAFTATSAVAQLYTTCSQGYGQCQQQPQPQPQPQPQPQMNTCSAFLQQCSQTAYVQSQMWQASGCQLMRQQCCQPLAQISEQARCQAVCSVAQIIMRQQQGQRFGQPQQQQGQSFSQPQQQVPVEIMGMVLQTLPSMCSVNIPQYCTTTPCSTIAPAIYNIPMTATCAGGAC</sequence>
<feature type="signal peptide" evidence="2">
    <location>
        <begin position="1"/>
        <end position="19"/>
    </location>
</feature>
<feature type="chain" id="PRO_0000410697" description="Avenin-like a6">
    <location>
        <begin position="20"/>
        <end position="181"/>
    </location>
</feature>
<reference key="1">
    <citation type="journal article" date="2003" name="Theor. Appl. Genet.">
        <title>The characterisation and mapping of a family of LMW-gliadin genes: effects on dough properties and bread volume.</title>
        <authorList>
            <person name="Clarke B.C."/>
            <person name="Phongkham T."/>
            <person name="Gianibelli M.C."/>
            <person name="Beasley H."/>
            <person name="Bekes F."/>
        </authorList>
    </citation>
    <scope>NUCLEOTIDE SEQUENCE [GENOMIC DNA / MRNA]</scope>
    <source>
        <strain>cv. Wyuna</strain>
    </source>
</reference>
<keyword id="KW-1015">Disulfide bond</keyword>
<keyword id="KW-1185">Reference proteome</keyword>
<keyword id="KW-0708">Seed storage protein</keyword>
<keyword id="KW-0732">Signal</keyword>
<keyword id="KW-0758">Storage protein</keyword>
<accession>P0CZ10</accession>
<protein>
    <recommendedName>
        <fullName>Avenin-like a6</fullName>
    </recommendedName>
    <alternativeName>
        <fullName>LMW-gliadin 1058</fullName>
        <shortName>LMGli1058</shortName>
    </alternativeName>
</protein>
<dbReference type="STRING" id="4565.P0CZ10"/>
<dbReference type="PaxDb" id="4565-Traes_4AL_FC0B3C3D31.4"/>
<dbReference type="eggNOG" id="ENOG502R3UJ">
    <property type="taxonomic scope" value="Eukaryota"/>
</dbReference>
<dbReference type="Proteomes" id="UP000019116">
    <property type="component" value="Unplaced"/>
</dbReference>
<dbReference type="GO" id="GO:0045735">
    <property type="term" value="F:nutrient reservoir activity"/>
    <property type="evidence" value="ECO:0007669"/>
    <property type="project" value="UniProtKB-KW"/>
</dbReference>
<dbReference type="CDD" id="cd00261">
    <property type="entry name" value="AAI_SS"/>
    <property type="match status" value="1"/>
</dbReference>
<dbReference type="Gene3D" id="1.10.110.10">
    <property type="entry name" value="Plant lipid-transfer and hydrophobic proteins"/>
    <property type="match status" value="1"/>
</dbReference>
<dbReference type="InterPro" id="IPR036312">
    <property type="entry name" value="Bifun_inhib/LTP/seed_sf"/>
</dbReference>
<dbReference type="InterPro" id="IPR016140">
    <property type="entry name" value="Bifunc_inhib/LTP/seed_store"/>
</dbReference>
<dbReference type="InterPro" id="IPR001954">
    <property type="entry name" value="Glia_glutenin"/>
</dbReference>
<dbReference type="PANTHER" id="PTHR33454">
    <property type="entry name" value="PROLAMIN PPROL 14P"/>
    <property type="match status" value="1"/>
</dbReference>
<dbReference type="PANTHER" id="PTHR33454:SF19">
    <property type="entry name" value="PROLAMIN PPROL 14P"/>
    <property type="match status" value="1"/>
</dbReference>
<dbReference type="Pfam" id="PF13016">
    <property type="entry name" value="Gliadin"/>
    <property type="match status" value="1"/>
</dbReference>
<dbReference type="PRINTS" id="PR00208">
    <property type="entry name" value="GLIADGLUTEN"/>
</dbReference>
<dbReference type="SMART" id="SM00499">
    <property type="entry name" value="AAI"/>
    <property type="match status" value="1"/>
</dbReference>
<dbReference type="SUPFAM" id="SSF47699">
    <property type="entry name" value="Bifunctional inhibitor/lipid-transfer protein/seed storage 2S albumin"/>
    <property type="match status" value="1"/>
</dbReference>
<evidence type="ECO:0000250" key="1"/>
<evidence type="ECO:0000255" key="2"/>
<evidence type="ECO:0000305" key="3"/>
<proteinExistence type="inferred from homology"/>
<comment type="function">
    <text evidence="1">Seed storage protein. Not integrated in the gluten polymer through disulfide bonds, unless incorporated by reduction and reoxidation during dough making. Increases dough strength and bread volume, but decreases dough stability when added into a base wheat flour (By similarity).</text>
</comment>
<comment type="PTM">
    <text evidence="3">Contains 7 disulfide bonds.</text>
</comment>
<comment type="similarity">
    <text evidence="3">Belongs to the prolamin family.</text>
</comment>
<name>AVLA6_WHEAT</name>